<keyword id="KW-0472">Membrane</keyword>
<keyword id="KW-0496">Mitochondrion</keyword>
<keyword id="KW-0999">Mitochondrion inner membrane</keyword>
<keyword id="KW-1185">Reference proteome</keyword>
<keyword id="KW-0812">Transmembrane</keyword>
<keyword id="KW-1133">Transmembrane helix</keyword>
<sequence length="307" mass="34436">MALPGVTKLLLLPGVRAQLLNTPVRLSHWATPGRCTKSCHAYLQKNLRFCTTRSFSSVSPAAESSEDTVLKWLLLLIPVATFSLGTWQVQRRSWKLKLIQEMEARVSGKPIPLTTDPMEIKELEYRPVKVRGHFDHSKELYILPRTLVDPEREAREAGQLASNTQSGAQVITPFYCSDLGITILVNRGFVPKKKVNPETRPKGQVSGEVELVGIVRLNETRKPFVPHNDPSRNLWHYKDLSAMAQVVGAEPILIDADRGSTVPGGPIGGQTRVTLRNEHMQYIVTWYGLCAATTYLWCKKFIRKVAL</sequence>
<protein>
    <recommendedName>
        <fullName>Surfeit locus protein 1</fullName>
    </recommendedName>
</protein>
<evidence type="ECO:0000250" key="1"/>
<evidence type="ECO:0000250" key="2">
    <source>
        <dbReference type="UniProtKB" id="Q15526"/>
    </source>
</evidence>
<evidence type="ECO:0000255" key="3"/>
<evidence type="ECO:0000305" key="4"/>
<accession>A4IHH4</accession>
<feature type="chain" id="PRO_0000344497" description="Surfeit locus protein 1">
    <location>
        <begin position="1"/>
        <end position="307"/>
    </location>
</feature>
<feature type="transmembrane region" description="Helical" evidence="3">
    <location>
        <begin position="69"/>
        <end position="87"/>
    </location>
</feature>
<feature type="transmembrane region" description="Helical" evidence="3">
    <location>
        <begin position="282"/>
        <end position="302"/>
    </location>
</feature>
<dbReference type="EMBL" id="BC135527">
    <property type="protein sequence ID" value="AAI35528.1"/>
    <property type="molecule type" value="mRNA"/>
</dbReference>
<dbReference type="RefSeq" id="NP_001016789.1">
    <property type="nucleotide sequence ID" value="NM_001016789.2"/>
</dbReference>
<dbReference type="SMR" id="A4IHH4"/>
<dbReference type="FunCoup" id="A4IHH4">
    <property type="interactions" value="1159"/>
</dbReference>
<dbReference type="STRING" id="8364.ENSXETP00000008753"/>
<dbReference type="PaxDb" id="8364-ENSXETP00000057384"/>
<dbReference type="DNASU" id="549543"/>
<dbReference type="GeneID" id="549543"/>
<dbReference type="KEGG" id="xtr:549543"/>
<dbReference type="AGR" id="Xenbase:XB-GENE-6453389"/>
<dbReference type="CTD" id="6834"/>
<dbReference type="Xenbase" id="XB-GENE-6453389">
    <property type="gene designation" value="surf1"/>
</dbReference>
<dbReference type="eggNOG" id="KOG1563">
    <property type="taxonomic scope" value="Eukaryota"/>
</dbReference>
<dbReference type="InParanoid" id="A4IHH4"/>
<dbReference type="OMA" id="WYSRDVA"/>
<dbReference type="OrthoDB" id="10040024at2759"/>
<dbReference type="Proteomes" id="UP000008143">
    <property type="component" value="Chromosome 8"/>
</dbReference>
<dbReference type="GO" id="GO:0005743">
    <property type="term" value="C:mitochondrial inner membrane"/>
    <property type="evidence" value="ECO:0007669"/>
    <property type="project" value="UniProtKB-SubCell"/>
</dbReference>
<dbReference type="GO" id="GO:0033617">
    <property type="term" value="P:mitochondrial cytochrome c oxidase assembly"/>
    <property type="evidence" value="ECO:0000250"/>
    <property type="project" value="UniProtKB"/>
</dbReference>
<dbReference type="CDD" id="cd06662">
    <property type="entry name" value="SURF1"/>
    <property type="match status" value="1"/>
</dbReference>
<dbReference type="InterPro" id="IPR002994">
    <property type="entry name" value="Surf1/Shy1"/>
</dbReference>
<dbReference type="InterPro" id="IPR045214">
    <property type="entry name" value="Surf1/Surf4"/>
</dbReference>
<dbReference type="PANTHER" id="PTHR23427">
    <property type="entry name" value="SURFEIT LOCUS PROTEIN"/>
    <property type="match status" value="1"/>
</dbReference>
<dbReference type="PANTHER" id="PTHR23427:SF2">
    <property type="entry name" value="SURFEIT LOCUS PROTEIN 1"/>
    <property type="match status" value="1"/>
</dbReference>
<dbReference type="Pfam" id="PF02104">
    <property type="entry name" value="SURF1"/>
    <property type="match status" value="1"/>
</dbReference>
<dbReference type="PROSITE" id="PS50895">
    <property type="entry name" value="SURF1"/>
    <property type="match status" value="1"/>
</dbReference>
<proteinExistence type="evidence at transcript level"/>
<organism>
    <name type="scientific">Xenopus tropicalis</name>
    <name type="common">Western clawed frog</name>
    <name type="synonym">Silurana tropicalis</name>
    <dbReference type="NCBI Taxonomy" id="8364"/>
    <lineage>
        <taxon>Eukaryota</taxon>
        <taxon>Metazoa</taxon>
        <taxon>Chordata</taxon>
        <taxon>Craniata</taxon>
        <taxon>Vertebrata</taxon>
        <taxon>Euteleostomi</taxon>
        <taxon>Amphibia</taxon>
        <taxon>Batrachia</taxon>
        <taxon>Anura</taxon>
        <taxon>Pipoidea</taxon>
        <taxon>Pipidae</taxon>
        <taxon>Xenopodinae</taxon>
        <taxon>Xenopus</taxon>
        <taxon>Silurana</taxon>
    </lineage>
</organism>
<comment type="function">
    <text evidence="2">May play a role in mitochondrial respiratory chain complex IV assembly. Probably involved in the biogenesis of the COX complex.</text>
</comment>
<comment type="subcellular location">
    <subcellularLocation>
        <location evidence="1">Mitochondrion inner membrane</location>
    </subcellularLocation>
</comment>
<comment type="similarity">
    <text evidence="4">Belongs to the SURF1 family.</text>
</comment>
<name>SURF1_XENTR</name>
<gene>
    <name type="primary">surf1</name>
</gene>
<reference key="1">
    <citation type="submission" date="2007-03" db="EMBL/GenBank/DDBJ databases">
        <authorList>
            <consortium name="NIH - Xenopus Gene Collection (XGC) project"/>
        </authorList>
    </citation>
    <scope>NUCLEOTIDE SEQUENCE [LARGE SCALE MRNA]</scope>
</reference>